<accession>Q8P0D4</accession>
<protein>
    <recommendedName>
        <fullName>Superoxide dismutase [Mn]</fullName>
        <ecNumber>1.15.1.1</ecNumber>
    </recommendedName>
</protein>
<sequence>MAIILPELPYAYDALEPQFDAETMSLHHDKHHATYVANTNAALEKHPEIGENLEELLADVTKIPEDIRQALINNGGGHLNHALFWELLSPEKQDVTPDVAQAIDDAFGSFDAFKEQFTAAATGRFGSGWAWLVVNKEGQLEITSTANQDTPISEGKKPILALDVWEHAYYLNYRNVRPNYIKAFFEIINWKKVSELYQAAK</sequence>
<organism>
    <name type="scientific">Streptococcus pyogenes serotype M18 (strain MGAS8232)</name>
    <dbReference type="NCBI Taxonomy" id="186103"/>
    <lineage>
        <taxon>Bacteria</taxon>
        <taxon>Bacillati</taxon>
        <taxon>Bacillota</taxon>
        <taxon>Bacilli</taxon>
        <taxon>Lactobacillales</taxon>
        <taxon>Streptococcaceae</taxon>
        <taxon>Streptococcus</taxon>
    </lineage>
</organism>
<keyword id="KW-0464">Manganese</keyword>
<keyword id="KW-0479">Metal-binding</keyword>
<keyword id="KW-0560">Oxidoreductase</keyword>
<keyword id="KW-0964">Secreted</keyword>
<gene>
    <name type="primary">sodA</name>
    <name type="ordered locus">spyM18_1414</name>
</gene>
<proteinExistence type="inferred from homology"/>
<evidence type="ECO:0000250" key="1"/>
<evidence type="ECO:0000305" key="2"/>
<dbReference type="EC" id="1.15.1.1"/>
<dbReference type="EMBL" id="AE009949">
    <property type="protein sequence ID" value="AAL98003.1"/>
    <property type="molecule type" value="Genomic_DNA"/>
</dbReference>
<dbReference type="RefSeq" id="WP_011017948.1">
    <property type="nucleotide sequence ID" value="NC_003485.1"/>
</dbReference>
<dbReference type="SMR" id="Q8P0D4"/>
<dbReference type="KEGG" id="spm:spyM18_1414"/>
<dbReference type="HOGENOM" id="CLU_031625_0_1_9"/>
<dbReference type="GO" id="GO:0005737">
    <property type="term" value="C:cytoplasm"/>
    <property type="evidence" value="ECO:0007669"/>
    <property type="project" value="TreeGrafter"/>
</dbReference>
<dbReference type="GO" id="GO:0005576">
    <property type="term" value="C:extracellular region"/>
    <property type="evidence" value="ECO:0007669"/>
    <property type="project" value="UniProtKB-SubCell"/>
</dbReference>
<dbReference type="GO" id="GO:0046872">
    <property type="term" value="F:metal ion binding"/>
    <property type="evidence" value="ECO:0007669"/>
    <property type="project" value="UniProtKB-KW"/>
</dbReference>
<dbReference type="GO" id="GO:0004784">
    <property type="term" value="F:superoxide dismutase activity"/>
    <property type="evidence" value="ECO:0007669"/>
    <property type="project" value="UniProtKB-EC"/>
</dbReference>
<dbReference type="FunFam" id="1.10.287.990:FF:000001">
    <property type="entry name" value="Superoxide dismutase"/>
    <property type="match status" value="1"/>
</dbReference>
<dbReference type="FunFam" id="3.55.40.20:FF:000001">
    <property type="entry name" value="Superoxide dismutase"/>
    <property type="match status" value="1"/>
</dbReference>
<dbReference type="Gene3D" id="1.10.287.990">
    <property type="entry name" value="Fe,Mn superoxide dismutase (SOD) domain"/>
    <property type="match status" value="1"/>
</dbReference>
<dbReference type="Gene3D" id="3.55.40.20">
    <property type="entry name" value="Iron/manganese superoxide dismutase, C-terminal domain"/>
    <property type="match status" value="1"/>
</dbReference>
<dbReference type="InterPro" id="IPR001189">
    <property type="entry name" value="Mn/Fe_SOD"/>
</dbReference>
<dbReference type="InterPro" id="IPR019833">
    <property type="entry name" value="Mn/Fe_SOD_BS"/>
</dbReference>
<dbReference type="InterPro" id="IPR019832">
    <property type="entry name" value="Mn/Fe_SOD_C"/>
</dbReference>
<dbReference type="InterPro" id="IPR019831">
    <property type="entry name" value="Mn/Fe_SOD_N"/>
</dbReference>
<dbReference type="InterPro" id="IPR036324">
    <property type="entry name" value="Mn/Fe_SOD_N_sf"/>
</dbReference>
<dbReference type="InterPro" id="IPR036314">
    <property type="entry name" value="SOD_C_sf"/>
</dbReference>
<dbReference type="PANTHER" id="PTHR43595">
    <property type="entry name" value="37S RIBOSOMAL PROTEIN S26, MITOCHONDRIAL"/>
    <property type="match status" value="1"/>
</dbReference>
<dbReference type="PANTHER" id="PTHR43595:SF2">
    <property type="entry name" value="SMALL RIBOSOMAL SUBUNIT PROTEIN MS42"/>
    <property type="match status" value="1"/>
</dbReference>
<dbReference type="Pfam" id="PF02777">
    <property type="entry name" value="Sod_Fe_C"/>
    <property type="match status" value="1"/>
</dbReference>
<dbReference type="Pfam" id="PF00081">
    <property type="entry name" value="Sod_Fe_N"/>
    <property type="match status" value="1"/>
</dbReference>
<dbReference type="PIRSF" id="PIRSF000349">
    <property type="entry name" value="SODismutase"/>
    <property type="match status" value="1"/>
</dbReference>
<dbReference type="PRINTS" id="PR01703">
    <property type="entry name" value="MNSODISMTASE"/>
</dbReference>
<dbReference type="SUPFAM" id="SSF54719">
    <property type="entry name" value="Fe,Mn superoxide dismutase (SOD), C-terminal domain"/>
    <property type="match status" value="1"/>
</dbReference>
<dbReference type="SUPFAM" id="SSF46609">
    <property type="entry name" value="Fe,Mn superoxide dismutase (SOD), N-terminal domain"/>
    <property type="match status" value="1"/>
</dbReference>
<dbReference type="PROSITE" id="PS00088">
    <property type="entry name" value="SOD_MN"/>
    <property type="match status" value="1"/>
</dbReference>
<reference key="1">
    <citation type="journal article" date="2002" name="Proc. Natl. Acad. Sci. U.S.A.">
        <title>Genome sequence and comparative microarray analysis of serotype M18 group A Streptococcus strains associated with acute rheumatic fever outbreaks.</title>
        <authorList>
            <person name="Smoot J.C."/>
            <person name="Barbian K.D."/>
            <person name="Van Gompel J.J."/>
            <person name="Smoot L.M."/>
            <person name="Chaussee M.S."/>
            <person name="Sylva G.L."/>
            <person name="Sturdevant D.E."/>
            <person name="Ricklefs S.M."/>
            <person name="Porcella S.F."/>
            <person name="Parkins L.D."/>
            <person name="Beres S.B."/>
            <person name="Campbell D.S."/>
            <person name="Smith T.M."/>
            <person name="Zhang Q."/>
            <person name="Kapur V."/>
            <person name="Daly J.A."/>
            <person name="Veasy L.G."/>
            <person name="Musser J.M."/>
        </authorList>
    </citation>
    <scope>NUCLEOTIDE SEQUENCE [LARGE SCALE GENOMIC DNA]</scope>
    <source>
        <strain>MGAS8232</strain>
    </source>
</reference>
<name>SODM_STRP8</name>
<feature type="initiator methionine" description="Removed" evidence="1">
    <location>
        <position position="1"/>
    </location>
</feature>
<feature type="chain" id="PRO_0000160104" description="Superoxide dismutase [Mn]">
    <location>
        <begin position="2"/>
        <end position="201"/>
    </location>
</feature>
<feature type="binding site" evidence="1">
    <location>
        <position position="27"/>
    </location>
    <ligand>
        <name>Mn(2+)</name>
        <dbReference type="ChEBI" id="CHEBI:29035"/>
    </ligand>
</feature>
<feature type="binding site" evidence="1">
    <location>
        <position position="81"/>
    </location>
    <ligand>
        <name>Mn(2+)</name>
        <dbReference type="ChEBI" id="CHEBI:29035"/>
    </ligand>
</feature>
<feature type="binding site" evidence="1">
    <location>
        <position position="163"/>
    </location>
    <ligand>
        <name>Mn(2+)</name>
        <dbReference type="ChEBI" id="CHEBI:29035"/>
    </ligand>
</feature>
<feature type="binding site" evidence="1">
    <location>
        <position position="167"/>
    </location>
    <ligand>
        <name>Mn(2+)</name>
        <dbReference type="ChEBI" id="CHEBI:29035"/>
    </ligand>
</feature>
<comment type="function">
    <text>Destroys superoxide anion radicals which are normally produced within the cells and which are toxic to biological systems.</text>
</comment>
<comment type="catalytic activity">
    <reaction>
        <text>2 superoxide + 2 H(+) = H2O2 + O2</text>
        <dbReference type="Rhea" id="RHEA:20696"/>
        <dbReference type="ChEBI" id="CHEBI:15378"/>
        <dbReference type="ChEBI" id="CHEBI:15379"/>
        <dbReference type="ChEBI" id="CHEBI:16240"/>
        <dbReference type="ChEBI" id="CHEBI:18421"/>
        <dbReference type="EC" id="1.15.1.1"/>
    </reaction>
</comment>
<comment type="cofactor">
    <cofactor evidence="1">
        <name>Mn(2+)</name>
        <dbReference type="ChEBI" id="CHEBI:29035"/>
    </cofactor>
    <text evidence="1">Binds 1 Mn(2+) ion per subunit.</text>
</comment>
<comment type="subunit">
    <text evidence="1">Homodimer.</text>
</comment>
<comment type="subcellular location">
    <subcellularLocation>
        <location evidence="1">Secreted</location>
    </subcellularLocation>
</comment>
<comment type="similarity">
    <text evidence="2">Belongs to the iron/manganese superoxide dismutase family.</text>
</comment>
<comment type="caution">
    <text evidence="2">Although found extracellularly, no signal sequence is present. An alternative secretory pathway may be used.</text>
</comment>